<proteinExistence type="inferred from homology"/>
<name>IF2P_HALSA</name>
<evidence type="ECO:0000250" key="1"/>
<evidence type="ECO:0000255" key="2">
    <source>
        <dbReference type="HAMAP-Rule" id="MF_00100"/>
    </source>
</evidence>
<evidence type="ECO:0000256" key="3">
    <source>
        <dbReference type="SAM" id="MobiDB-lite"/>
    </source>
</evidence>
<evidence type="ECO:0000305" key="4"/>
<organism>
    <name type="scientific">Halobacterium salinarum (strain ATCC 700922 / JCM 11081 / NRC-1)</name>
    <name type="common">Halobacterium halobium</name>
    <dbReference type="NCBI Taxonomy" id="64091"/>
    <lineage>
        <taxon>Archaea</taxon>
        <taxon>Methanobacteriati</taxon>
        <taxon>Methanobacteriota</taxon>
        <taxon>Stenosarchaea group</taxon>
        <taxon>Halobacteria</taxon>
        <taxon>Halobacteriales</taxon>
        <taxon>Halobacteriaceae</taxon>
        <taxon>Halobacterium</taxon>
        <taxon>Halobacterium salinarum NRC-34001</taxon>
    </lineage>
</organism>
<reference key="1">
    <citation type="journal article" date="1998" name="Biochem. Mol. Biol. Int.">
        <title>Cloning and sequencing of the homologues of both the bacterial and eukaryotic initiation factor genes (hIF-2 and heIF-2gamma) from archaeal Halobacterium halobium.</title>
        <authorList>
            <person name="Hasegawa Y."/>
            <person name="Sawaoka N."/>
            <person name="Kado N."/>
            <person name="Ochi M."/>
            <person name="Itoh T."/>
        </authorList>
    </citation>
    <scope>NUCLEOTIDE SEQUENCE [GENOMIC DNA]</scope>
    <source>
        <strain>A9</strain>
    </source>
</reference>
<reference key="2">
    <citation type="journal article" date="2000" name="Proc. Natl. Acad. Sci. U.S.A.">
        <title>Genome sequence of Halobacterium species NRC-1.</title>
        <authorList>
            <person name="Ng W.V."/>
            <person name="Kennedy S.P."/>
            <person name="Mahairas G.G."/>
            <person name="Berquist B."/>
            <person name="Pan M."/>
            <person name="Shukla H.D."/>
            <person name="Lasky S.R."/>
            <person name="Baliga N.S."/>
            <person name="Thorsson V."/>
            <person name="Sbrogna J."/>
            <person name="Swartzell S."/>
            <person name="Weir D."/>
            <person name="Hall J."/>
            <person name="Dahl T.A."/>
            <person name="Welti R."/>
            <person name="Goo Y.A."/>
            <person name="Leithauser B."/>
            <person name="Keller K."/>
            <person name="Cruz R."/>
            <person name="Danson M.J."/>
            <person name="Hough D.W."/>
            <person name="Maddocks D.G."/>
            <person name="Jablonski P.E."/>
            <person name="Krebs M.P."/>
            <person name="Angevine C.M."/>
            <person name="Dale H."/>
            <person name="Isenbarger T.A."/>
            <person name="Peck R.F."/>
            <person name="Pohlschroder M."/>
            <person name="Spudich J.L."/>
            <person name="Jung K.-H."/>
            <person name="Alam M."/>
            <person name="Freitas T."/>
            <person name="Hou S."/>
            <person name="Daniels C.J."/>
            <person name="Dennis P.P."/>
            <person name="Omer A.D."/>
            <person name="Ebhardt H."/>
            <person name="Lowe T.M."/>
            <person name="Liang P."/>
            <person name="Riley M."/>
            <person name="Hood L."/>
            <person name="DasSarma S."/>
        </authorList>
    </citation>
    <scope>NUCLEOTIDE SEQUENCE [LARGE SCALE GENOMIC DNA]</scope>
    <source>
        <strain>ATCC 700922 / JCM 11081 / NRC-1</strain>
    </source>
</reference>
<gene>
    <name evidence="2" type="primary">infB</name>
    <name type="synonym">hif2</name>
    <name type="ordered locus">VNG_1997G</name>
</gene>
<keyword id="KW-0342">GTP-binding</keyword>
<keyword id="KW-0396">Initiation factor</keyword>
<keyword id="KW-0547">Nucleotide-binding</keyword>
<keyword id="KW-0648">Protein biosynthesis</keyword>
<keyword id="KW-1185">Reference proteome</keyword>
<sequence>MPDADTTDDPGDLRTPIVAVLGHVDHGKTSLLDKIRGSAVIEGEAGAITQHIGATAVPLDTVSEVAGSLVDPTEFDLPGLLFIDTPGHHSFSTLRSRGGALADIAILVVDVNDGFQPQTEEAIRILKDTGTPFVVAANKIDTTPGWNPNPDAPVQGTYDDQSDRVRSDLDDALYELIGEMSDAGFSSDLYWRVQNFQKNVGVIPVSAETGEGVPDLLTVLMGLAQRYMKSEMEVTIDGPGAGTVLEVKDEQGFGTTVDVILYDGTIRSGDTVVVGAQPEPIVTDVRALLKPGDLAEMRTEKRFGNVDRMQAAAGLKVAAPDLDDAMAGAPIRVVGDRDVADVVTEVEAELAEVAVETGEEGIVVKADTLGSLEALVSALEEAEIPVMSAEVGDVAPRDVAMATTVDSEKHRVLLGFNVDVLPAAAENAERESVRVFNSDVIYQLVEDYEAFVDAQEREQKEAVFDNIVRPARFRILKDHVFRQNDPAVVGVEVVSGTLKRNTPVGGIEGNDLDRAGIVKGIQDQGEDVDEARAGNRVSVSIDGPTVGRDIKEGDELWVDLPEKHAKVLDQELTSDLPADEREALKSYLDIMRKRDPFWGK</sequence>
<protein>
    <recommendedName>
        <fullName evidence="2">Probable translation initiation factor IF-2</fullName>
    </recommendedName>
</protein>
<dbReference type="EMBL" id="AB015763">
    <property type="protein sequence ID" value="BAA35081.1"/>
    <property type="molecule type" value="Genomic_DNA"/>
</dbReference>
<dbReference type="EMBL" id="AE004437">
    <property type="protein sequence ID" value="AAG20168.1"/>
    <property type="molecule type" value="Genomic_DNA"/>
</dbReference>
<dbReference type="PIR" id="D84350">
    <property type="entry name" value="D84350"/>
</dbReference>
<dbReference type="PIR" id="T43849">
    <property type="entry name" value="T43849"/>
</dbReference>
<dbReference type="RefSeq" id="WP_010903469.1">
    <property type="nucleotide sequence ID" value="NC_002607.1"/>
</dbReference>
<dbReference type="SMR" id="Q9HNQ2"/>
<dbReference type="STRING" id="64091.VNG_1997G"/>
<dbReference type="PaxDb" id="64091-VNG_1997G"/>
<dbReference type="GeneID" id="89350183"/>
<dbReference type="KEGG" id="hal:VNG_1997G"/>
<dbReference type="PATRIC" id="fig|64091.14.peg.1525"/>
<dbReference type="HOGENOM" id="CLU_002656_3_3_2"/>
<dbReference type="InParanoid" id="Q9HNQ2"/>
<dbReference type="OrthoDB" id="30957at2157"/>
<dbReference type="PhylomeDB" id="Q9HNQ2"/>
<dbReference type="Proteomes" id="UP000000554">
    <property type="component" value="Chromosome"/>
</dbReference>
<dbReference type="GO" id="GO:0005737">
    <property type="term" value="C:cytoplasm"/>
    <property type="evidence" value="ECO:0000318"/>
    <property type="project" value="GO_Central"/>
</dbReference>
<dbReference type="GO" id="GO:0005525">
    <property type="term" value="F:GTP binding"/>
    <property type="evidence" value="ECO:0007669"/>
    <property type="project" value="UniProtKB-KW"/>
</dbReference>
<dbReference type="GO" id="GO:0003924">
    <property type="term" value="F:GTPase activity"/>
    <property type="evidence" value="ECO:0007669"/>
    <property type="project" value="UniProtKB-UniRule"/>
</dbReference>
<dbReference type="GO" id="GO:0003743">
    <property type="term" value="F:translation initiation factor activity"/>
    <property type="evidence" value="ECO:0000318"/>
    <property type="project" value="GO_Central"/>
</dbReference>
<dbReference type="GO" id="GO:0006413">
    <property type="term" value="P:translational initiation"/>
    <property type="evidence" value="ECO:0000318"/>
    <property type="project" value="GO_Central"/>
</dbReference>
<dbReference type="CDD" id="cd03703">
    <property type="entry name" value="aeIF5B_II"/>
    <property type="match status" value="1"/>
</dbReference>
<dbReference type="CDD" id="cd16266">
    <property type="entry name" value="IF2_aeIF5B_IV"/>
    <property type="match status" value="1"/>
</dbReference>
<dbReference type="CDD" id="cd01887">
    <property type="entry name" value="IF2_eIF5B"/>
    <property type="match status" value="1"/>
</dbReference>
<dbReference type="FunFam" id="3.40.50.300:FF:000112">
    <property type="entry name" value="Eukaryotic translation initiation factor 5B"/>
    <property type="match status" value="1"/>
</dbReference>
<dbReference type="FunFam" id="2.40.30.10:FF:000013">
    <property type="entry name" value="eukaryotic translation initiation factor 5B"/>
    <property type="match status" value="1"/>
</dbReference>
<dbReference type="FunFam" id="2.40.30.10:FF:000225">
    <property type="entry name" value="Probable translation initiation factor IF-2"/>
    <property type="match status" value="1"/>
</dbReference>
<dbReference type="FunFam" id="3.40.50.10050:FF:000001">
    <property type="entry name" value="Translation initiation factor IF-2"/>
    <property type="match status" value="1"/>
</dbReference>
<dbReference type="Gene3D" id="3.40.50.300">
    <property type="entry name" value="P-loop containing nucleotide triphosphate hydrolases"/>
    <property type="match status" value="1"/>
</dbReference>
<dbReference type="Gene3D" id="2.40.30.10">
    <property type="entry name" value="Translation factors"/>
    <property type="match status" value="2"/>
</dbReference>
<dbReference type="Gene3D" id="3.40.50.10050">
    <property type="entry name" value="Translation initiation factor IF- 2, domain 3"/>
    <property type="match status" value="1"/>
</dbReference>
<dbReference type="HAMAP" id="MF_00100_A">
    <property type="entry name" value="IF_2_A"/>
    <property type="match status" value="1"/>
</dbReference>
<dbReference type="InterPro" id="IPR004161">
    <property type="entry name" value="EFTu-like_2"/>
</dbReference>
<dbReference type="InterPro" id="IPR029459">
    <property type="entry name" value="EFTU-type"/>
</dbReference>
<dbReference type="InterPro" id="IPR027417">
    <property type="entry name" value="P-loop_NTPase"/>
</dbReference>
<dbReference type="InterPro" id="IPR005225">
    <property type="entry name" value="Small_GTP-bd"/>
</dbReference>
<dbReference type="InterPro" id="IPR000795">
    <property type="entry name" value="T_Tr_GTP-bd_dom"/>
</dbReference>
<dbReference type="InterPro" id="IPR004544">
    <property type="entry name" value="TF_aIF-2_arc"/>
</dbReference>
<dbReference type="InterPro" id="IPR015760">
    <property type="entry name" value="TIF_IF2"/>
</dbReference>
<dbReference type="InterPro" id="IPR023115">
    <property type="entry name" value="TIF_IF2_dom3"/>
</dbReference>
<dbReference type="InterPro" id="IPR036925">
    <property type="entry name" value="TIF_IF2_dom3_sf"/>
</dbReference>
<dbReference type="InterPro" id="IPR009000">
    <property type="entry name" value="Transl_B-barrel_sf"/>
</dbReference>
<dbReference type="NCBIfam" id="TIGR00491">
    <property type="entry name" value="aIF-2"/>
    <property type="match status" value="1"/>
</dbReference>
<dbReference type="NCBIfam" id="NF003078">
    <property type="entry name" value="PRK04004.1"/>
    <property type="match status" value="1"/>
</dbReference>
<dbReference type="NCBIfam" id="TIGR00231">
    <property type="entry name" value="small_GTP"/>
    <property type="match status" value="1"/>
</dbReference>
<dbReference type="PANTHER" id="PTHR43381:SF4">
    <property type="entry name" value="EUKARYOTIC TRANSLATION INITIATION FACTOR 5B"/>
    <property type="match status" value="1"/>
</dbReference>
<dbReference type="PANTHER" id="PTHR43381">
    <property type="entry name" value="TRANSLATION INITIATION FACTOR IF-2-RELATED"/>
    <property type="match status" value="1"/>
</dbReference>
<dbReference type="Pfam" id="PF00009">
    <property type="entry name" value="GTP_EFTU"/>
    <property type="match status" value="1"/>
</dbReference>
<dbReference type="Pfam" id="PF03144">
    <property type="entry name" value="GTP_EFTU_D2"/>
    <property type="match status" value="1"/>
</dbReference>
<dbReference type="Pfam" id="PF14578">
    <property type="entry name" value="GTP_EFTU_D4"/>
    <property type="match status" value="1"/>
</dbReference>
<dbReference type="Pfam" id="PF11987">
    <property type="entry name" value="IF-2"/>
    <property type="match status" value="1"/>
</dbReference>
<dbReference type="PRINTS" id="PR00315">
    <property type="entry name" value="ELONGATNFCT"/>
</dbReference>
<dbReference type="SUPFAM" id="SSF52156">
    <property type="entry name" value="Initiation factor IF2/eIF5b, domain 3"/>
    <property type="match status" value="1"/>
</dbReference>
<dbReference type="SUPFAM" id="SSF52540">
    <property type="entry name" value="P-loop containing nucleoside triphosphate hydrolases"/>
    <property type="match status" value="1"/>
</dbReference>
<dbReference type="SUPFAM" id="SSF50447">
    <property type="entry name" value="Translation proteins"/>
    <property type="match status" value="1"/>
</dbReference>
<dbReference type="PROSITE" id="PS51722">
    <property type="entry name" value="G_TR_2"/>
    <property type="match status" value="1"/>
</dbReference>
<comment type="function">
    <text evidence="2">Function in general translation initiation by promoting the binding of the formylmethionine-tRNA to ribosomes. Seems to function along with eIF-2.</text>
</comment>
<comment type="similarity">
    <text evidence="2">Belongs to the TRAFAC class translation factor GTPase superfamily. Classic translation factor GTPase family. IF-2 subfamily.</text>
</comment>
<feature type="chain" id="PRO_0000137300" description="Probable translation initiation factor IF-2">
    <location>
        <begin position="1"/>
        <end position="600"/>
    </location>
</feature>
<feature type="domain" description="tr-type G">
    <location>
        <begin position="13"/>
        <end position="228"/>
    </location>
</feature>
<feature type="region of interest" description="G1" evidence="1">
    <location>
        <begin position="22"/>
        <end position="29"/>
    </location>
</feature>
<feature type="region of interest" description="G2" evidence="1">
    <location>
        <begin position="47"/>
        <end position="51"/>
    </location>
</feature>
<feature type="region of interest" description="G3" evidence="1">
    <location>
        <begin position="84"/>
        <end position="87"/>
    </location>
</feature>
<feature type="region of interest" description="G4" evidence="1">
    <location>
        <begin position="138"/>
        <end position="141"/>
    </location>
</feature>
<feature type="region of interest" description="Disordered" evidence="3">
    <location>
        <begin position="140"/>
        <end position="162"/>
    </location>
</feature>
<feature type="region of interest" description="G5" evidence="1">
    <location>
        <begin position="206"/>
        <end position="208"/>
    </location>
</feature>
<feature type="binding site" evidence="2">
    <location>
        <begin position="22"/>
        <end position="29"/>
    </location>
    <ligand>
        <name>GTP</name>
        <dbReference type="ChEBI" id="CHEBI:37565"/>
    </ligand>
</feature>
<feature type="binding site" evidence="2">
    <location>
        <begin position="84"/>
        <end position="88"/>
    </location>
    <ligand>
        <name>GTP</name>
        <dbReference type="ChEBI" id="CHEBI:37565"/>
    </ligand>
</feature>
<feature type="binding site" evidence="2">
    <location>
        <begin position="138"/>
        <end position="141"/>
    </location>
    <ligand>
        <name>GTP</name>
        <dbReference type="ChEBI" id="CHEBI:37565"/>
    </ligand>
</feature>
<feature type="sequence conflict" description="In Ref. 1; BAA35081." evidence="4" ref="1">
    <original>LDTVSEVAGS</original>
    <variation>AGHRLGGRRQ</variation>
    <location>
        <begin position="59"/>
        <end position="68"/>
    </location>
</feature>
<feature type="sequence conflict" description="In Ref. 1; BAA35081." evidence="4" ref="1">
    <original>STLRSR</original>
    <variation>FEHALG</variation>
    <location>
        <begin position="92"/>
        <end position="97"/>
    </location>
</feature>
<feature type="sequence conflict" description="In Ref. 1; BAA35081." evidence="4" ref="1">
    <original>DG</original>
    <variation>ER</variation>
    <location>
        <begin position="113"/>
        <end position="114"/>
    </location>
</feature>
<feature type="sequence conflict" description="In Ref. 1; BAA35081." evidence="4" ref="1">
    <original>DR</original>
    <variation>EP</variation>
    <location>
        <begin position="163"/>
        <end position="164"/>
    </location>
</feature>
<feature type="sequence conflict" description="In Ref. 1; BAA35081." evidence="4" ref="1">
    <original>PIRVV</original>
    <variation>RSAWS</variation>
    <location>
        <begin position="330"/>
        <end position="334"/>
    </location>
</feature>
<feature type="sequence conflict" description="In Ref. 1." evidence="4" ref="1">
    <original>EREALKSYLDIMRKRDPFWGK</original>
    <variation>GARR</variation>
    <location>
        <begin position="580"/>
        <end position="600"/>
    </location>
</feature>
<accession>Q9HNQ2</accession>
<accession>O93625</accession>